<feature type="chain" id="PRO_1000097297" description="Peptide deformylase">
    <location>
        <begin position="1"/>
        <end position="185"/>
    </location>
</feature>
<feature type="active site" evidence="1">
    <location>
        <position position="137"/>
    </location>
</feature>
<feature type="binding site" evidence="1">
    <location>
        <position position="94"/>
    </location>
    <ligand>
        <name>Fe cation</name>
        <dbReference type="ChEBI" id="CHEBI:24875"/>
    </ligand>
</feature>
<feature type="binding site" evidence="1">
    <location>
        <position position="136"/>
    </location>
    <ligand>
        <name>Fe cation</name>
        <dbReference type="ChEBI" id="CHEBI:24875"/>
    </ligand>
</feature>
<feature type="binding site" evidence="1">
    <location>
        <position position="140"/>
    </location>
    <ligand>
        <name>Fe cation</name>
        <dbReference type="ChEBI" id="CHEBI:24875"/>
    </ligand>
</feature>
<keyword id="KW-0378">Hydrolase</keyword>
<keyword id="KW-0408">Iron</keyword>
<keyword id="KW-0479">Metal-binding</keyword>
<keyword id="KW-0648">Protein biosynthesis</keyword>
<sequence>MIVPINIYSDDVLRQQALPLEGVDKEVEELLGNMFETMYSAPGIGLAAPQVGRSLRLLVLDISCMREYANVKPMVVINPEIVAVKGYRSMEEGCLSLPGLQGDVVRPSSISLNYRDEHFEGQNAEFSGLLARVLQHEIDHLDGRLFVDRLQKKERRKVQKELDALASGRFIASYPVVLPVKVNKA</sequence>
<reference key="1">
    <citation type="submission" date="2008-05" db="EMBL/GenBank/DDBJ databases">
        <title>Complete sequence of Chlorobium limicola DSM 245.</title>
        <authorList>
            <consortium name="US DOE Joint Genome Institute"/>
            <person name="Lucas S."/>
            <person name="Copeland A."/>
            <person name="Lapidus A."/>
            <person name="Glavina del Rio T."/>
            <person name="Dalin E."/>
            <person name="Tice H."/>
            <person name="Bruce D."/>
            <person name="Goodwin L."/>
            <person name="Pitluck S."/>
            <person name="Schmutz J."/>
            <person name="Larimer F."/>
            <person name="Land M."/>
            <person name="Hauser L."/>
            <person name="Kyrpides N."/>
            <person name="Ovchinnikova G."/>
            <person name="Zhao F."/>
            <person name="Li T."/>
            <person name="Liu Z."/>
            <person name="Overmann J."/>
            <person name="Bryant D.A."/>
            <person name="Richardson P."/>
        </authorList>
    </citation>
    <scope>NUCLEOTIDE SEQUENCE [LARGE SCALE GENOMIC DNA]</scope>
    <source>
        <strain>DSM 245 / NBRC 103803 / 6330</strain>
    </source>
</reference>
<name>DEF_CHLL2</name>
<proteinExistence type="inferred from homology"/>
<gene>
    <name evidence="1" type="primary">def</name>
    <name type="ordered locus">Clim_1679</name>
</gene>
<comment type="function">
    <text evidence="1">Removes the formyl group from the N-terminal Met of newly synthesized proteins. Requires at least a dipeptide for an efficient rate of reaction. N-terminal L-methionine is a prerequisite for activity but the enzyme has broad specificity at other positions.</text>
</comment>
<comment type="catalytic activity">
    <reaction evidence="1">
        <text>N-terminal N-formyl-L-methionyl-[peptide] + H2O = N-terminal L-methionyl-[peptide] + formate</text>
        <dbReference type="Rhea" id="RHEA:24420"/>
        <dbReference type="Rhea" id="RHEA-COMP:10639"/>
        <dbReference type="Rhea" id="RHEA-COMP:10640"/>
        <dbReference type="ChEBI" id="CHEBI:15377"/>
        <dbReference type="ChEBI" id="CHEBI:15740"/>
        <dbReference type="ChEBI" id="CHEBI:49298"/>
        <dbReference type="ChEBI" id="CHEBI:64731"/>
        <dbReference type="EC" id="3.5.1.88"/>
    </reaction>
</comment>
<comment type="cofactor">
    <cofactor evidence="1">
        <name>Fe(2+)</name>
        <dbReference type="ChEBI" id="CHEBI:29033"/>
    </cofactor>
    <text evidence="1">Binds 1 Fe(2+) ion.</text>
</comment>
<comment type="similarity">
    <text evidence="1">Belongs to the polypeptide deformylase family.</text>
</comment>
<accession>B3EE19</accession>
<dbReference type="EC" id="3.5.1.88" evidence="1"/>
<dbReference type="EMBL" id="CP001097">
    <property type="protein sequence ID" value="ACD90721.1"/>
    <property type="molecule type" value="Genomic_DNA"/>
</dbReference>
<dbReference type="RefSeq" id="WP_012466594.1">
    <property type="nucleotide sequence ID" value="NC_010803.1"/>
</dbReference>
<dbReference type="SMR" id="B3EE19"/>
<dbReference type="STRING" id="290315.Clim_1679"/>
<dbReference type="KEGG" id="cli:Clim_1679"/>
<dbReference type="eggNOG" id="COG0242">
    <property type="taxonomic scope" value="Bacteria"/>
</dbReference>
<dbReference type="HOGENOM" id="CLU_061901_2_0_10"/>
<dbReference type="OrthoDB" id="9784988at2"/>
<dbReference type="Proteomes" id="UP000008841">
    <property type="component" value="Chromosome"/>
</dbReference>
<dbReference type="GO" id="GO:0046872">
    <property type="term" value="F:metal ion binding"/>
    <property type="evidence" value="ECO:0007669"/>
    <property type="project" value="UniProtKB-KW"/>
</dbReference>
<dbReference type="GO" id="GO:0042586">
    <property type="term" value="F:peptide deformylase activity"/>
    <property type="evidence" value="ECO:0007669"/>
    <property type="project" value="UniProtKB-UniRule"/>
</dbReference>
<dbReference type="GO" id="GO:0043686">
    <property type="term" value="P:co-translational protein modification"/>
    <property type="evidence" value="ECO:0007669"/>
    <property type="project" value="TreeGrafter"/>
</dbReference>
<dbReference type="GO" id="GO:0006412">
    <property type="term" value="P:translation"/>
    <property type="evidence" value="ECO:0007669"/>
    <property type="project" value="UniProtKB-UniRule"/>
</dbReference>
<dbReference type="CDD" id="cd00487">
    <property type="entry name" value="Pep_deformylase"/>
    <property type="match status" value="1"/>
</dbReference>
<dbReference type="Gene3D" id="3.90.45.10">
    <property type="entry name" value="Peptide deformylase"/>
    <property type="match status" value="1"/>
</dbReference>
<dbReference type="HAMAP" id="MF_00163">
    <property type="entry name" value="Pep_deformylase"/>
    <property type="match status" value="1"/>
</dbReference>
<dbReference type="InterPro" id="IPR023635">
    <property type="entry name" value="Peptide_deformylase"/>
</dbReference>
<dbReference type="InterPro" id="IPR036821">
    <property type="entry name" value="Peptide_deformylase_sf"/>
</dbReference>
<dbReference type="NCBIfam" id="TIGR00079">
    <property type="entry name" value="pept_deformyl"/>
    <property type="match status" value="1"/>
</dbReference>
<dbReference type="NCBIfam" id="NF001159">
    <property type="entry name" value="PRK00150.1-3"/>
    <property type="match status" value="1"/>
</dbReference>
<dbReference type="PANTHER" id="PTHR10458">
    <property type="entry name" value="PEPTIDE DEFORMYLASE"/>
    <property type="match status" value="1"/>
</dbReference>
<dbReference type="PANTHER" id="PTHR10458:SF22">
    <property type="entry name" value="PEPTIDE DEFORMYLASE"/>
    <property type="match status" value="1"/>
</dbReference>
<dbReference type="Pfam" id="PF01327">
    <property type="entry name" value="Pep_deformylase"/>
    <property type="match status" value="1"/>
</dbReference>
<dbReference type="PIRSF" id="PIRSF004749">
    <property type="entry name" value="Pep_def"/>
    <property type="match status" value="1"/>
</dbReference>
<dbReference type="PRINTS" id="PR01576">
    <property type="entry name" value="PDEFORMYLASE"/>
</dbReference>
<dbReference type="SUPFAM" id="SSF56420">
    <property type="entry name" value="Peptide deformylase"/>
    <property type="match status" value="1"/>
</dbReference>
<protein>
    <recommendedName>
        <fullName evidence="1">Peptide deformylase</fullName>
        <shortName evidence="1">PDF</shortName>
        <ecNumber evidence="1">3.5.1.88</ecNumber>
    </recommendedName>
    <alternativeName>
        <fullName evidence="1">Polypeptide deformylase</fullName>
    </alternativeName>
</protein>
<evidence type="ECO:0000255" key="1">
    <source>
        <dbReference type="HAMAP-Rule" id="MF_00163"/>
    </source>
</evidence>
<organism>
    <name type="scientific">Chlorobium limicola (strain DSM 245 / NBRC 103803 / 6330)</name>
    <dbReference type="NCBI Taxonomy" id="290315"/>
    <lineage>
        <taxon>Bacteria</taxon>
        <taxon>Pseudomonadati</taxon>
        <taxon>Chlorobiota</taxon>
        <taxon>Chlorobiia</taxon>
        <taxon>Chlorobiales</taxon>
        <taxon>Chlorobiaceae</taxon>
        <taxon>Chlorobium/Pelodictyon group</taxon>
        <taxon>Chlorobium</taxon>
    </lineage>
</organism>